<protein>
    <recommendedName>
        <fullName evidence="1">Large ribosomal subunit protein uL1</fullName>
    </recommendedName>
    <alternativeName>
        <fullName evidence="2">50S ribosomal protein L1</fullName>
    </alternativeName>
</protein>
<accession>B5Z8J8</accession>
<reference key="1">
    <citation type="journal article" date="2009" name="J. Bacteriol.">
        <title>The complete genome sequence of Helicobacter pylori strain G27.</title>
        <authorList>
            <person name="Baltrus D.A."/>
            <person name="Amieva M.R."/>
            <person name="Covacci A."/>
            <person name="Lowe T.M."/>
            <person name="Merrell D.S."/>
            <person name="Ottemann K.M."/>
            <person name="Stein M."/>
            <person name="Salama N.R."/>
            <person name="Guillemin K."/>
        </authorList>
    </citation>
    <scope>NUCLEOTIDE SEQUENCE [LARGE SCALE GENOMIC DNA]</scope>
    <source>
        <strain>G27</strain>
    </source>
</reference>
<evidence type="ECO:0000255" key="1">
    <source>
        <dbReference type="HAMAP-Rule" id="MF_01318"/>
    </source>
</evidence>
<evidence type="ECO:0000305" key="2"/>
<feature type="chain" id="PRO_1000141413" description="Large ribosomal subunit protein uL1">
    <location>
        <begin position="1"/>
        <end position="234"/>
    </location>
</feature>
<sequence>MAKKVFKRLEKLFSKIQNDKAYGVEQGVEVVKSLASAKFDETVEVALRLGVDPRHADQMVRGAVVLPHGTGKKVRVAVFAKDIKQDEAKNAGADVVGGDDLAEEIKNGRIDFDMVIATPDMMAVVGKVGRILGPKGLMPNPKTGTVTMDIAKAVTNAKSGQVNFRVDKKGNVHAPIGKASFPEEKIKENMLELVKTINRLKPSSAKGKYIRNAALSLTMSPSVSLDAQELMDIK</sequence>
<comment type="function">
    <text evidence="1">Binds directly to 23S rRNA. The L1 stalk is quite mobile in the ribosome, and is involved in E site tRNA release.</text>
</comment>
<comment type="function">
    <text evidence="1">Protein L1 is also a translational repressor protein, it controls the translation of the L11 operon by binding to its mRNA.</text>
</comment>
<comment type="subunit">
    <text evidence="1">Part of the 50S ribosomal subunit.</text>
</comment>
<comment type="similarity">
    <text evidence="1">Belongs to the universal ribosomal protein uL1 family.</text>
</comment>
<gene>
    <name evidence="1" type="primary">rplA</name>
    <name type="ordered locus">HPG27_1147</name>
</gene>
<organism>
    <name type="scientific">Helicobacter pylori (strain G27)</name>
    <dbReference type="NCBI Taxonomy" id="563041"/>
    <lineage>
        <taxon>Bacteria</taxon>
        <taxon>Pseudomonadati</taxon>
        <taxon>Campylobacterota</taxon>
        <taxon>Epsilonproteobacteria</taxon>
        <taxon>Campylobacterales</taxon>
        <taxon>Helicobacteraceae</taxon>
        <taxon>Helicobacter</taxon>
    </lineage>
</organism>
<proteinExistence type="inferred from homology"/>
<keyword id="KW-1185">Reference proteome</keyword>
<keyword id="KW-0678">Repressor</keyword>
<keyword id="KW-0687">Ribonucleoprotein</keyword>
<keyword id="KW-0689">Ribosomal protein</keyword>
<keyword id="KW-0694">RNA-binding</keyword>
<keyword id="KW-0699">rRNA-binding</keyword>
<keyword id="KW-0810">Translation regulation</keyword>
<keyword id="KW-0820">tRNA-binding</keyword>
<dbReference type="EMBL" id="CP001173">
    <property type="protein sequence ID" value="ACI27897.1"/>
    <property type="molecule type" value="Genomic_DNA"/>
</dbReference>
<dbReference type="RefSeq" id="WP_001085847.1">
    <property type="nucleotide sequence ID" value="NC_011333.1"/>
</dbReference>
<dbReference type="SMR" id="B5Z8J8"/>
<dbReference type="KEGG" id="hpg:HPG27_1147"/>
<dbReference type="HOGENOM" id="CLU_062853_0_0_7"/>
<dbReference type="Proteomes" id="UP000001735">
    <property type="component" value="Chromosome"/>
</dbReference>
<dbReference type="GO" id="GO:0022625">
    <property type="term" value="C:cytosolic large ribosomal subunit"/>
    <property type="evidence" value="ECO:0007669"/>
    <property type="project" value="TreeGrafter"/>
</dbReference>
<dbReference type="GO" id="GO:0019843">
    <property type="term" value="F:rRNA binding"/>
    <property type="evidence" value="ECO:0007669"/>
    <property type="project" value="UniProtKB-UniRule"/>
</dbReference>
<dbReference type="GO" id="GO:0003735">
    <property type="term" value="F:structural constituent of ribosome"/>
    <property type="evidence" value="ECO:0007669"/>
    <property type="project" value="InterPro"/>
</dbReference>
<dbReference type="GO" id="GO:0000049">
    <property type="term" value="F:tRNA binding"/>
    <property type="evidence" value="ECO:0007669"/>
    <property type="project" value="UniProtKB-KW"/>
</dbReference>
<dbReference type="GO" id="GO:0006417">
    <property type="term" value="P:regulation of translation"/>
    <property type="evidence" value="ECO:0007669"/>
    <property type="project" value="UniProtKB-KW"/>
</dbReference>
<dbReference type="GO" id="GO:0006412">
    <property type="term" value="P:translation"/>
    <property type="evidence" value="ECO:0007669"/>
    <property type="project" value="UniProtKB-UniRule"/>
</dbReference>
<dbReference type="CDD" id="cd00403">
    <property type="entry name" value="Ribosomal_L1"/>
    <property type="match status" value="1"/>
</dbReference>
<dbReference type="FunFam" id="3.40.50.790:FF:000001">
    <property type="entry name" value="50S ribosomal protein L1"/>
    <property type="match status" value="1"/>
</dbReference>
<dbReference type="Gene3D" id="3.30.190.20">
    <property type="match status" value="1"/>
</dbReference>
<dbReference type="Gene3D" id="3.40.50.790">
    <property type="match status" value="1"/>
</dbReference>
<dbReference type="HAMAP" id="MF_01318_B">
    <property type="entry name" value="Ribosomal_uL1_B"/>
    <property type="match status" value="1"/>
</dbReference>
<dbReference type="InterPro" id="IPR005878">
    <property type="entry name" value="Ribosom_uL1_bac-type"/>
</dbReference>
<dbReference type="InterPro" id="IPR002143">
    <property type="entry name" value="Ribosomal_uL1"/>
</dbReference>
<dbReference type="InterPro" id="IPR023674">
    <property type="entry name" value="Ribosomal_uL1-like"/>
</dbReference>
<dbReference type="InterPro" id="IPR028364">
    <property type="entry name" value="Ribosomal_uL1/biogenesis"/>
</dbReference>
<dbReference type="InterPro" id="IPR016095">
    <property type="entry name" value="Ribosomal_uL1_3-a/b-sand"/>
</dbReference>
<dbReference type="InterPro" id="IPR023673">
    <property type="entry name" value="Ribosomal_uL1_CS"/>
</dbReference>
<dbReference type="NCBIfam" id="TIGR01169">
    <property type="entry name" value="rplA_bact"/>
    <property type="match status" value="1"/>
</dbReference>
<dbReference type="PANTHER" id="PTHR36427">
    <property type="entry name" value="54S RIBOSOMAL PROTEIN L1, MITOCHONDRIAL"/>
    <property type="match status" value="1"/>
</dbReference>
<dbReference type="PANTHER" id="PTHR36427:SF3">
    <property type="entry name" value="LARGE RIBOSOMAL SUBUNIT PROTEIN UL1M"/>
    <property type="match status" value="1"/>
</dbReference>
<dbReference type="Pfam" id="PF00687">
    <property type="entry name" value="Ribosomal_L1"/>
    <property type="match status" value="1"/>
</dbReference>
<dbReference type="PIRSF" id="PIRSF002155">
    <property type="entry name" value="Ribosomal_L1"/>
    <property type="match status" value="1"/>
</dbReference>
<dbReference type="SUPFAM" id="SSF56808">
    <property type="entry name" value="Ribosomal protein L1"/>
    <property type="match status" value="1"/>
</dbReference>
<dbReference type="PROSITE" id="PS01199">
    <property type="entry name" value="RIBOSOMAL_L1"/>
    <property type="match status" value="1"/>
</dbReference>
<name>RL1_HELPG</name>